<reference key="1">
    <citation type="journal article" date="2007" name="Genome Res.">
        <title>Reductive evolution and niche adaptation inferred from the genome of Mycobacterium ulcerans, the causative agent of Buruli ulcer.</title>
        <authorList>
            <person name="Stinear T.P."/>
            <person name="Seemann T."/>
            <person name="Pidot S."/>
            <person name="Frigui W."/>
            <person name="Reysset G."/>
            <person name="Garnier T."/>
            <person name="Meurice G."/>
            <person name="Simon D."/>
            <person name="Bouchier C."/>
            <person name="Ma L."/>
            <person name="Tichit M."/>
            <person name="Porter J.L."/>
            <person name="Ryan J."/>
            <person name="Johnson P.D.R."/>
            <person name="Davies J.K."/>
            <person name="Jenkin G.A."/>
            <person name="Small P.L.C."/>
            <person name="Jones L.M."/>
            <person name="Tekaia F."/>
            <person name="Laval F."/>
            <person name="Daffe M."/>
            <person name="Parkhill J."/>
            <person name="Cole S.T."/>
        </authorList>
    </citation>
    <scope>NUCLEOTIDE SEQUENCE [LARGE SCALE GENOMIC DNA]</scope>
    <source>
        <strain>Agy99</strain>
    </source>
</reference>
<sequence length="743" mass="81050">MSSDSRPPQPDTSTQSNSESESPAISSPTPQDHAPMTNRDWWPNQIDVSMLHPHPSQASPLGADFDYPKEFAKLDVDALKADVMSVMTTSQDWWPADYGHYGGLFIRMSWHAAGTYRIQDGRGGGGQGMQRFAPLNSWPDNVSLDKARRLLWPVKQKYGSEISWADLIIFAGNCALDSMGFKTFGFGFGREDVWQPEEVMWGEEDVWLGTDKRYSGKRDLAQPYGATTMGLIYVNPEGPEGKPDPVAAAHDIRETFARMAMNDEETAALIVGGHSFGKTHGAGDADLVGPEPEAAPIEQQGFGWKSSFGSGKGKDAITSGLEVVWTPTPTQWGNGFLELLYGYEWELTKSPAGAWQFTAKDGAGAGTIPDPFGGPGRAPTMLVTDISMREDPIYRRITQRWLEHPEELTEAFAKAWYKLLHRDMGPVSRYLGPWVAEPQLWQDPVPDVDHELVDAKDVAALKSKVLASGLTVAQLVKTAWSAASSFRRTDKRGGANGGRLRLEPQKSWESNEPADLDQVLSVLEGIQQDFNSSAAGGKKISLADLIVLAGSAAVEKAAKDGGHEVSVPFSPGRTDASQENTDVESFAVLEPRADGFRNYVRVGEKAPLEHLLIERAYRLGVTAPEMTVLVGGLRALGANHGGSEHGVFTDKPGVLSNDFFVNLLDMGTEWKASDAAENVYEGCDRSSGQLKWTATANDLVFGSNSVLRALAEVYAQSDAKQKFAEDFAAAWAKVMNNDRFDLE</sequence>
<comment type="function">
    <text evidence="1">Bifunctional enzyme with both catalase and broad-spectrum peroxidase activity.</text>
</comment>
<comment type="catalytic activity">
    <reaction evidence="1">
        <text>H2O2 + AH2 = A + 2 H2O</text>
        <dbReference type="Rhea" id="RHEA:30275"/>
        <dbReference type="ChEBI" id="CHEBI:13193"/>
        <dbReference type="ChEBI" id="CHEBI:15377"/>
        <dbReference type="ChEBI" id="CHEBI:16240"/>
        <dbReference type="ChEBI" id="CHEBI:17499"/>
        <dbReference type="EC" id="1.11.1.21"/>
    </reaction>
</comment>
<comment type="catalytic activity">
    <reaction evidence="1">
        <text>2 H2O2 = O2 + 2 H2O</text>
        <dbReference type="Rhea" id="RHEA:20309"/>
        <dbReference type="ChEBI" id="CHEBI:15377"/>
        <dbReference type="ChEBI" id="CHEBI:15379"/>
        <dbReference type="ChEBI" id="CHEBI:16240"/>
        <dbReference type="EC" id="1.11.1.21"/>
    </reaction>
</comment>
<comment type="cofactor">
    <cofactor evidence="1">
        <name>heme b</name>
        <dbReference type="ChEBI" id="CHEBI:60344"/>
    </cofactor>
    <text evidence="1">Binds 1 heme b (iron(II)-protoporphyrin IX) group per dimer.</text>
</comment>
<comment type="subunit">
    <text evidence="1">Homodimer or homotetramer.</text>
</comment>
<comment type="PTM">
    <text evidence="1">Formation of the three residue Trp-Tyr-Met cross-link is important for the catalase, but not the peroxidase activity of the enzyme.</text>
</comment>
<comment type="similarity">
    <text evidence="1">Belongs to the peroxidase family. Peroxidase/catalase subfamily.</text>
</comment>
<comment type="sequence caution" evidence="3">
    <conflict type="erroneous initiation">
        <sequence resource="EMBL-CDS" id="ABL04595"/>
    </conflict>
</comment>
<proteinExistence type="inferred from homology"/>
<feature type="chain" id="PRO_0000354845" description="Catalase-peroxidase">
    <location>
        <begin position="1"/>
        <end position="743"/>
    </location>
</feature>
<feature type="region of interest" description="Disordered" evidence="2">
    <location>
        <begin position="1"/>
        <end position="40"/>
    </location>
</feature>
<feature type="region of interest" description="Disordered" evidence="2">
    <location>
        <begin position="490"/>
        <end position="511"/>
    </location>
</feature>
<feature type="compositionally biased region" description="Polar residues" evidence="2">
    <location>
        <begin position="1"/>
        <end position="15"/>
    </location>
</feature>
<feature type="compositionally biased region" description="Low complexity" evidence="2">
    <location>
        <begin position="16"/>
        <end position="28"/>
    </location>
</feature>
<feature type="active site" description="Proton acceptor" evidence="1">
    <location>
        <position position="111"/>
    </location>
</feature>
<feature type="binding site" description="axial binding residue" evidence="1">
    <location>
        <position position="274"/>
    </location>
    <ligand>
        <name>heme b</name>
        <dbReference type="ChEBI" id="CHEBI:60344"/>
    </ligand>
    <ligandPart>
        <name>Fe</name>
        <dbReference type="ChEBI" id="CHEBI:18248"/>
    </ligandPart>
</feature>
<feature type="site" description="Transition state stabilizer" evidence="1">
    <location>
        <position position="107"/>
    </location>
</feature>
<feature type="cross-link" description="Tryptophyl-tyrosyl-methioninium (Trp-Tyr) (with M-259)" evidence="1">
    <location>
        <begin position="110"/>
        <end position="233"/>
    </location>
</feature>
<feature type="cross-link" description="Tryptophyl-tyrosyl-methioninium (Tyr-Met) (with W-110)" evidence="1">
    <location>
        <begin position="233"/>
        <end position="259"/>
    </location>
</feature>
<name>KATG_MYCUA</name>
<dbReference type="EC" id="1.11.1.21" evidence="1"/>
<dbReference type="EMBL" id="CP000325">
    <property type="protein sequence ID" value="ABL04595.1"/>
    <property type="status" value="ALT_INIT"/>
    <property type="molecule type" value="Genomic_DNA"/>
</dbReference>
<dbReference type="RefSeq" id="WP_071498273.1">
    <property type="nucleotide sequence ID" value="NC_008611.1"/>
</dbReference>
<dbReference type="SMR" id="A0PQH6"/>
<dbReference type="KEGG" id="mul:MUL_2190"/>
<dbReference type="eggNOG" id="COG0376">
    <property type="taxonomic scope" value="Bacteria"/>
</dbReference>
<dbReference type="HOGENOM" id="CLU_025424_2_0_11"/>
<dbReference type="Proteomes" id="UP000000765">
    <property type="component" value="Chromosome"/>
</dbReference>
<dbReference type="GO" id="GO:0005829">
    <property type="term" value="C:cytosol"/>
    <property type="evidence" value="ECO:0007669"/>
    <property type="project" value="TreeGrafter"/>
</dbReference>
<dbReference type="GO" id="GO:0004096">
    <property type="term" value="F:catalase activity"/>
    <property type="evidence" value="ECO:0007669"/>
    <property type="project" value="UniProtKB-UniRule"/>
</dbReference>
<dbReference type="GO" id="GO:0020037">
    <property type="term" value="F:heme binding"/>
    <property type="evidence" value="ECO:0007669"/>
    <property type="project" value="InterPro"/>
</dbReference>
<dbReference type="GO" id="GO:0046872">
    <property type="term" value="F:metal ion binding"/>
    <property type="evidence" value="ECO:0007669"/>
    <property type="project" value="UniProtKB-KW"/>
</dbReference>
<dbReference type="GO" id="GO:0070301">
    <property type="term" value="P:cellular response to hydrogen peroxide"/>
    <property type="evidence" value="ECO:0007669"/>
    <property type="project" value="TreeGrafter"/>
</dbReference>
<dbReference type="GO" id="GO:0042744">
    <property type="term" value="P:hydrogen peroxide catabolic process"/>
    <property type="evidence" value="ECO:0007669"/>
    <property type="project" value="UniProtKB-KW"/>
</dbReference>
<dbReference type="CDD" id="cd08200">
    <property type="entry name" value="catalase_peroxidase_2"/>
    <property type="match status" value="1"/>
</dbReference>
<dbReference type="FunFam" id="1.10.420.10:FF:000002">
    <property type="entry name" value="Catalase-peroxidase"/>
    <property type="match status" value="1"/>
</dbReference>
<dbReference type="FunFam" id="1.10.420.10:FF:000004">
    <property type="entry name" value="Catalase-peroxidase"/>
    <property type="match status" value="1"/>
</dbReference>
<dbReference type="FunFam" id="1.10.520.10:FF:000002">
    <property type="entry name" value="Catalase-peroxidase"/>
    <property type="match status" value="1"/>
</dbReference>
<dbReference type="Gene3D" id="1.10.520.10">
    <property type="match status" value="2"/>
</dbReference>
<dbReference type="Gene3D" id="1.10.420.10">
    <property type="entry name" value="Peroxidase, domain 2"/>
    <property type="match status" value="2"/>
</dbReference>
<dbReference type="HAMAP" id="MF_01961">
    <property type="entry name" value="Catal_peroxid"/>
    <property type="match status" value="1"/>
</dbReference>
<dbReference type="InterPro" id="IPR000763">
    <property type="entry name" value="Catalase_peroxidase"/>
</dbReference>
<dbReference type="InterPro" id="IPR002016">
    <property type="entry name" value="Haem_peroxidase"/>
</dbReference>
<dbReference type="InterPro" id="IPR010255">
    <property type="entry name" value="Haem_peroxidase_sf"/>
</dbReference>
<dbReference type="InterPro" id="IPR019794">
    <property type="entry name" value="Peroxidases_AS"/>
</dbReference>
<dbReference type="InterPro" id="IPR019793">
    <property type="entry name" value="Peroxidases_heam-ligand_BS"/>
</dbReference>
<dbReference type="NCBIfam" id="TIGR00198">
    <property type="entry name" value="cat_per_HPI"/>
    <property type="match status" value="1"/>
</dbReference>
<dbReference type="NCBIfam" id="NF011635">
    <property type="entry name" value="PRK15061.1"/>
    <property type="match status" value="1"/>
</dbReference>
<dbReference type="PANTHER" id="PTHR30555:SF0">
    <property type="entry name" value="CATALASE-PEROXIDASE"/>
    <property type="match status" value="1"/>
</dbReference>
<dbReference type="PANTHER" id="PTHR30555">
    <property type="entry name" value="HYDROPEROXIDASE I, BIFUNCTIONAL CATALASE-PEROXIDASE"/>
    <property type="match status" value="1"/>
</dbReference>
<dbReference type="Pfam" id="PF00141">
    <property type="entry name" value="peroxidase"/>
    <property type="match status" value="2"/>
</dbReference>
<dbReference type="PRINTS" id="PR00460">
    <property type="entry name" value="BPEROXIDASE"/>
</dbReference>
<dbReference type="PRINTS" id="PR00458">
    <property type="entry name" value="PEROXIDASE"/>
</dbReference>
<dbReference type="SUPFAM" id="SSF48113">
    <property type="entry name" value="Heme-dependent peroxidases"/>
    <property type="match status" value="2"/>
</dbReference>
<dbReference type="PROSITE" id="PS00435">
    <property type="entry name" value="PEROXIDASE_1"/>
    <property type="match status" value="1"/>
</dbReference>
<dbReference type="PROSITE" id="PS00436">
    <property type="entry name" value="PEROXIDASE_2"/>
    <property type="match status" value="1"/>
</dbReference>
<dbReference type="PROSITE" id="PS50873">
    <property type="entry name" value="PEROXIDASE_4"/>
    <property type="match status" value="2"/>
</dbReference>
<organism>
    <name type="scientific">Mycobacterium ulcerans (strain Agy99)</name>
    <dbReference type="NCBI Taxonomy" id="362242"/>
    <lineage>
        <taxon>Bacteria</taxon>
        <taxon>Bacillati</taxon>
        <taxon>Actinomycetota</taxon>
        <taxon>Actinomycetes</taxon>
        <taxon>Mycobacteriales</taxon>
        <taxon>Mycobacteriaceae</taxon>
        <taxon>Mycobacterium</taxon>
        <taxon>Mycobacterium ulcerans group</taxon>
    </lineage>
</organism>
<accession>A0PQH6</accession>
<keyword id="KW-0349">Heme</keyword>
<keyword id="KW-0376">Hydrogen peroxide</keyword>
<keyword id="KW-0408">Iron</keyword>
<keyword id="KW-0479">Metal-binding</keyword>
<keyword id="KW-0560">Oxidoreductase</keyword>
<keyword id="KW-0575">Peroxidase</keyword>
<evidence type="ECO:0000255" key="1">
    <source>
        <dbReference type="HAMAP-Rule" id="MF_01961"/>
    </source>
</evidence>
<evidence type="ECO:0000256" key="2">
    <source>
        <dbReference type="SAM" id="MobiDB-lite"/>
    </source>
</evidence>
<evidence type="ECO:0000305" key="3"/>
<gene>
    <name evidence="1" type="primary">katG</name>
    <name type="ordered locus">MUL_2190</name>
</gene>
<protein>
    <recommendedName>
        <fullName evidence="1">Catalase-peroxidase</fullName>
        <shortName evidence="1">CP</shortName>
        <ecNumber evidence="1">1.11.1.21</ecNumber>
    </recommendedName>
    <alternativeName>
        <fullName evidence="1">Peroxidase/catalase</fullName>
    </alternativeName>
</protein>